<organism>
    <name type="scientific">Saccharophagus degradans (strain 2-40 / ATCC 43961 / DSM 17024)</name>
    <dbReference type="NCBI Taxonomy" id="203122"/>
    <lineage>
        <taxon>Bacteria</taxon>
        <taxon>Pseudomonadati</taxon>
        <taxon>Pseudomonadota</taxon>
        <taxon>Gammaproteobacteria</taxon>
        <taxon>Cellvibrionales</taxon>
        <taxon>Cellvibrionaceae</taxon>
        <taxon>Saccharophagus</taxon>
    </lineage>
</organism>
<proteinExistence type="inferred from homology"/>
<accession>Q21K60</accession>
<feature type="chain" id="PRO_0000294405" description="Malate dehydrogenase">
    <location>
        <begin position="1"/>
        <end position="327"/>
    </location>
</feature>
<feature type="active site" description="Proton acceptor" evidence="1">
    <location>
        <position position="187"/>
    </location>
</feature>
<feature type="binding site" evidence="1">
    <location>
        <begin position="11"/>
        <end position="17"/>
    </location>
    <ligand>
        <name>NAD(+)</name>
        <dbReference type="ChEBI" id="CHEBI:57540"/>
    </ligand>
</feature>
<feature type="binding site" evidence="1">
    <location>
        <position position="92"/>
    </location>
    <ligand>
        <name>substrate</name>
    </ligand>
</feature>
<feature type="binding site" evidence="1">
    <location>
        <position position="98"/>
    </location>
    <ligand>
        <name>substrate</name>
    </ligand>
</feature>
<feature type="binding site" evidence="1">
    <location>
        <position position="105"/>
    </location>
    <ligand>
        <name>NAD(+)</name>
        <dbReference type="ChEBI" id="CHEBI:57540"/>
    </ligand>
</feature>
<feature type="binding site" evidence="1">
    <location>
        <position position="112"/>
    </location>
    <ligand>
        <name>NAD(+)</name>
        <dbReference type="ChEBI" id="CHEBI:57540"/>
    </ligand>
</feature>
<feature type="binding site" evidence="1">
    <location>
        <begin position="129"/>
        <end position="131"/>
    </location>
    <ligand>
        <name>NAD(+)</name>
        <dbReference type="ChEBI" id="CHEBI:57540"/>
    </ligand>
</feature>
<feature type="binding site" evidence="1">
    <location>
        <position position="131"/>
    </location>
    <ligand>
        <name>substrate</name>
    </ligand>
</feature>
<feature type="binding site" evidence="1">
    <location>
        <position position="162"/>
    </location>
    <ligand>
        <name>substrate</name>
    </ligand>
</feature>
<evidence type="ECO:0000255" key="1">
    <source>
        <dbReference type="HAMAP-Rule" id="MF_01517"/>
    </source>
</evidence>
<protein>
    <recommendedName>
        <fullName evidence="1">Malate dehydrogenase</fullName>
        <ecNumber evidence="1">1.1.1.37</ecNumber>
    </recommendedName>
</protein>
<sequence>MKAPVRVAVTGAAGQISYSLLFRIAAGEMLGKDQPVILQMLEITPALEALKGVAMELDDCAFPLLAGMVCSDDPNVAFKDADYALLVGARPRGPGMERKDLLEANAAIFSVQGKAINDHASRDIKVLVVGNPANTNALIAQRNAPDINPRQFTAMMRLDHNRGLSQLAAKLDVTLEDITKMTIWGNHSATQYPDLFHTLVKGDVAVEQVEKDWYENDFIPTVQQRGAAIIKARGASSAASAANAAIFHMRDWALGTPENDWVSMGVYSDGSYGIEEGLIYSFPCVCKNGDWEIVQGLTIDEFSRAKMTATENELKEERDAVKSLLPA</sequence>
<reference key="1">
    <citation type="journal article" date="2008" name="PLoS Genet.">
        <title>Complete genome sequence of the complex carbohydrate-degrading marine bacterium, Saccharophagus degradans strain 2-40 T.</title>
        <authorList>
            <person name="Weiner R.M."/>
            <person name="Taylor L.E. II"/>
            <person name="Henrissat B."/>
            <person name="Hauser L."/>
            <person name="Land M."/>
            <person name="Coutinho P.M."/>
            <person name="Rancurel C."/>
            <person name="Saunders E.H."/>
            <person name="Longmire A.G."/>
            <person name="Zhang H."/>
            <person name="Bayer E.A."/>
            <person name="Gilbert H.J."/>
            <person name="Larimer F."/>
            <person name="Zhulin I.B."/>
            <person name="Ekborg N.A."/>
            <person name="Lamed R."/>
            <person name="Richardson P.M."/>
            <person name="Borovok I."/>
            <person name="Hutcheson S."/>
        </authorList>
    </citation>
    <scope>NUCLEOTIDE SEQUENCE [LARGE SCALE GENOMIC DNA]</scope>
    <source>
        <strain>2-40 / ATCC 43961 / DSM 17024</strain>
    </source>
</reference>
<dbReference type="EC" id="1.1.1.37" evidence="1"/>
<dbReference type="EMBL" id="CP000282">
    <property type="protein sequence ID" value="ABD80919.1"/>
    <property type="molecule type" value="Genomic_DNA"/>
</dbReference>
<dbReference type="RefSeq" id="WP_011468139.1">
    <property type="nucleotide sequence ID" value="NC_007912.1"/>
</dbReference>
<dbReference type="SMR" id="Q21K60"/>
<dbReference type="STRING" id="203122.Sde_1659"/>
<dbReference type="GeneID" id="98613334"/>
<dbReference type="KEGG" id="sde:Sde_1659"/>
<dbReference type="eggNOG" id="COG0039">
    <property type="taxonomic scope" value="Bacteria"/>
</dbReference>
<dbReference type="HOGENOM" id="CLU_040727_2_0_6"/>
<dbReference type="OrthoDB" id="9802969at2"/>
<dbReference type="Proteomes" id="UP000001947">
    <property type="component" value="Chromosome"/>
</dbReference>
<dbReference type="GO" id="GO:0030060">
    <property type="term" value="F:L-malate dehydrogenase (NAD+) activity"/>
    <property type="evidence" value="ECO:0007669"/>
    <property type="project" value="UniProtKB-UniRule"/>
</dbReference>
<dbReference type="GO" id="GO:0006108">
    <property type="term" value="P:malate metabolic process"/>
    <property type="evidence" value="ECO:0007669"/>
    <property type="project" value="InterPro"/>
</dbReference>
<dbReference type="GO" id="GO:0006099">
    <property type="term" value="P:tricarboxylic acid cycle"/>
    <property type="evidence" value="ECO:0007669"/>
    <property type="project" value="UniProtKB-UniRule"/>
</dbReference>
<dbReference type="CDD" id="cd01338">
    <property type="entry name" value="MDH_chloroplast-like"/>
    <property type="match status" value="1"/>
</dbReference>
<dbReference type="FunFam" id="3.40.50.720:FF:000010">
    <property type="entry name" value="Malate dehydrogenase"/>
    <property type="match status" value="1"/>
</dbReference>
<dbReference type="FunFam" id="3.90.110.10:FF:000002">
    <property type="entry name" value="Malate dehydrogenase"/>
    <property type="match status" value="1"/>
</dbReference>
<dbReference type="Gene3D" id="3.90.110.10">
    <property type="entry name" value="Lactate dehydrogenase/glycoside hydrolase, family 4, C-terminal"/>
    <property type="match status" value="1"/>
</dbReference>
<dbReference type="Gene3D" id="3.40.50.720">
    <property type="entry name" value="NAD(P)-binding Rossmann-like Domain"/>
    <property type="match status" value="1"/>
</dbReference>
<dbReference type="HAMAP" id="MF_01517">
    <property type="entry name" value="Malate_dehydrog_2"/>
    <property type="match status" value="1"/>
</dbReference>
<dbReference type="InterPro" id="IPR001557">
    <property type="entry name" value="L-lactate/malate_DH"/>
</dbReference>
<dbReference type="InterPro" id="IPR022383">
    <property type="entry name" value="Lactate/malate_DH_C"/>
</dbReference>
<dbReference type="InterPro" id="IPR001236">
    <property type="entry name" value="Lactate/malate_DH_N"/>
</dbReference>
<dbReference type="InterPro" id="IPR015955">
    <property type="entry name" value="Lactate_DH/Glyco_Ohase_4_C"/>
</dbReference>
<dbReference type="InterPro" id="IPR010945">
    <property type="entry name" value="Malate_DH_type2"/>
</dbReference>
<dbReference type="InterPro" id="IPR036291">
    <property type="entry name" value="NAD(P)-bd_dom_sf"/>
</dbReference>
<dbReference type="NCBIfam" id="TIGR01759">
    <property type="entry name" value="MalateDH-SF1"/>
    <property type="match status" value="1"/>
</dbReference>
<dbReference type="NCBIfam" id="NF003916">
    <property type="entry name" value="PRK05442.1"/>
    <property type="match status" value="1"/>
</dbReference>
<dbReference type="PANTHER" id="PTHR23382">
    <property type="entry name" value="MALATE DEHYDROGENASE"/>
    <property type="match status" value="1"/>
</dbReference>
<dbReference type="Pfam" id="PF02866">
    <property type="entry name" value="Ldh_1_C"/>
    <property type="match status" value="1"/>
</dbReference>
<dbReference type="Pfam" id="PF00056">
    <property type="entry name" value="Ldh_1_N"/>
    <property type="match status" value="1"/>
</dbReference>
<dbReference type="PIRSF" id="PIRSF000102">
    <property type="entry name" value="Lac_mal_DH"/>
    <property type="match status" value="1"/>
</dbReference>
<dbReference type="SUPFAM" id="SSF56327">
    <property type="entry name" value="LDH C-terminal domain-like"/>
    <property type="match status" value="1"/>
</dbReference>
<dbReference type="SUPFAM" id="SSF51735">
    <property type="entry name" value="NAD(P)-binding Rossmann-fold domains"/>
    <property type="match status" value="1"/>
</dbReference>
<comment type="function">
    <text evidence="1">Catalyzes the reversible oxidation of malate to oxaloacetate.</text>
</comment>
<comment type="catalytic activity">
    <reaction evidence="1">
        <text>(S)-malate + NAD(+) = oxaloacetate + NADH + H(+)</text>
        <dbReference type="Rhea" id="RHEA:21432"/>
        <dbReference type="ChEBI" id="CHEBI:15378"/>
        <dbReference type="ChEBI" id="CHEBI:15589"/>
        <dbReference type="ChEBI" id="CHEBI:16452"/>
        <dbReference type="ChEBI" id="CHEBI:57540"/>
        <dbReference type="ChEBI" id="CHEBI:57945"/>
        <dbReference type="EC" id="1.1.1.37"/>
    </reaction>
</comment>
<comment type="similarity">
    <text evidence="1">Belongs to the LDH/MDH superfamily. MDH type 2 family.</text>
</comment>
<name>MDH_SACD2</name>
<gene>
    <name evidence="1" type="primary">mdh</name>
    <name type="ordered locus">Sde_1659</name>
</gene>
<keyword id="KW-0520">NAD</keyword>
<keyword id="KW-0560">Oxidoreductase</keyword>
<keyword id="KW-1185">Reference proteome</keyword>
<keyword id="KW-0816">Tricarboxylic acid cycle</keyword>